<evidence type="ECO:0000255" key="1"/>
<evidence type="ECO:0000269" key="2">
    <source>
    </source>
</evidence>
<evidence type="ECO:0000269" key="3">
    <source>
    </source>
</evidence>
<evidence type="ECO:0000269" key="4">
    <source>
    </source>
</evidence>
<evidence type="ECO:0000305" key="5"/>
<evidence type="ECO:0007829" key="6">
    <source>
        <dbReference type="PDB" id="3T6Q"/>
    </source>
</evidence>
<accession>Q62192</accession>
<accession>Q8C251</accession>
<sequence>MAPDISCFFLVALFLASCRATTSSDQKCIEKEVNKTYNCENLGLNEIPGTLPNSTECLEFSFNVLPTIQNTTFSRLINLTFLDLTRCQIYWIHEDTFQSQHRLDTLVLTANPLIFMAETALSGPKALKHLFFIQTGISSIDFIPLHNQKTLESLYLGSNHISSIKLPKGFPTEKLKVLDFQNNAIHYLSKEDMSSLQQATNLSLNLNGNDIAGIELGAFDSAVFQSLNFGGTQNLLVIFKGLKNSTIQSLWLGTFEDMDDEDISPAVFEGLCEMSVESINLQKHYFFNISSNTFHCFSGLQELDLTATHLSELPSGLVGLSTLKKLVLSANKFENLCQISASNFPSLTHLSIKGNTKRLELGTGCLENLENLRELDLSHDDIETSDCCNLQLRNLSHLQSLNLSYNEPLSLKTEAFKECPQLELLDLAFTRLKVKDAQSPFQNLHLLKVLNLSHSLLDISSEQLFDGLPALQHLNLQGNHFPKGNIQKTNSLQTLGRLEILVLSFCDLSSIDQHAFTSLKMMNHVDLSHNRLTSSSIEALSHLKGIYLNLASNRISIILPSLLPILSQQRTINLRQNPLDCTCSNIYFLEWYKENMQKLEDTEDTLCENPPLLRGVRLSDVTLSCSMAAVGIFFLIVFLLVFAILLIFAVKYFLRWKYQHI</sequence>
<reference key="1">
    <citation type="journal article" date="1995" name="J. Immunol.">
        <title>RP105, a novel B cell surface molecule implicated in B cell activation, is a member of the leucine-rich repeat protein family.</title>
        <authorList>
            <person name="Miyake K."/>
            <person name="Yamashita Y."/>
            <person name="Ogata M."/>
            <person name="Sudo T."/>
            <person name="Kimoto M."/>
        </authorList>
    </citation>
    <scope>NUCLEOTIDE SEQUENCE [MRNA]</scope>
    <scope>PROTEIN SEQUENCE OF 21-43</scope>
    <source>
        <strain>BALB/cJ</strain>
        <tissue>B-cell lymphoma</tissue>
    </source>
</reference>
<reference key="2">
    <citation type="journal article" date="2005" name="Science">
        <title>The transcriptional landscape of the mammalian genome.</title>
        <authorList>
            <person name="Carninci P."/>
            <person name="Kasukawa T."/>
            <person name="Katayama S."/>
            <person name="Gough J."/>
            <person name="Frith M.C."/>
            <person name="Maeda N."/>
            <person name="Oyama R."/>
            <person name="Ravasi T."/>
            <person name="Lenhard B."/>
            <person name="Wells C."/>
            <person name="Kodzius R."/>
            <person name="Shimokawa K."/>
            <person name="Bajic V.B."/>
            <person name="Brenner S.E."/>
            <person name="Batalov S."/>
            <person name="Forrest A.R."/>
            <person name="Zavolan M."/>
            <person name="Davis M.J."/>
            <person name="Wilming L.G."/>
            <person name="Aidinis V."/>
            <person name="Allen J.E."/>
            <person name="Ambesi-Impiombato A."/>
            <person name="Apweiler R."/>
            <person name="Aturaliya R.N."/>
            <person name="Bailey T.L."/>
            <person name="Bansal M."/>
            <person name="Baxter L."/>
            <person name="Beisel K.W."/>
            <person name="Bersano T."/>
            <person name="Bono H."/>
            <person name="Chalk A.M."/>
            <person name="Chiu K.P."/>
            <person name="Choudhary V."/>
            <person name="Christoffels A."/>
            <person name="Clutterbuck D.R."/>
            <person name="Crowe M.L."/>
            <person name="Dalla E."/>
            <person name="Dalrymple B.P."/>
            <person name="de Bono B."/>
            <person name="Della Gatta G."/>
            <person name="di Bernardo D."/>
            <person name="Down T."/>
            <person name="Engstrom P."/>
            <person name="Fagiolini M."/>
            <person name="Faulkner G."/>
            <person name="Fletcher C.F."/>
            <person name="Fukushima T."/>
            <person name="Furuno M."/>
            <person name="Futaki S."/>
            <person name="Gariboldi M."/>
            <person name="Georgii-Hemming P."/>
            <person name="Gingeras T.R."/>
            <person name="Gojobori T."/>
            <person name="Green R.E."/>
            <person name="Gustincich S."/>
            <person name="Harbers M."/>
            <person name="Hayashi Y."/>
            <person name="Hensch T.K."/>
            <person name="Hirokawa N."/>
            <person name="Hill D."/>
            <person name="Huminiecki L."/>
            <person name="Iacono M."/>
            <person name="Ikeo K."/>
            <person name="Iwama A."/>
            <person name="Ishikawa T."/>
            <person name="Jakt M."/>
            <person name="Kanapin A."/>
            <person name="Katoh M."/>
            <person name="Kawasawa Y."/>
            <person name="Kelso J."/>
            <person name="Kitamura H."/>
            <person name="Kitano H."/>
            <person name="Kollias G."/>
            <person name="Krishnan S.P."/>
            <person name="Kruger A."/>
            <person name="Kummerfeld S.K."/>
            <person name="Kurochkin I.V."/>
            <person name="Lareau L.F."/>
            <person name="Lazarevic D."/>
            <person name="Lipovich L."/>
            <person name="Liu J."/>
            <person name="Liuni S."/>
            <person name="McWilliam S."/>
            <person name="Madan Babu M."/>
            <person name="Madera M."/>
            <person name="Marchionni L."/>
            <person name="Matsuda H."/>
            <person name="Matsuzawa S."/>
            <person name="Miki H."/>
            <person name="Mignone F."/>
            <person name="Miyake S."/>
            <person name="Morris K."/>
            <person name="Mottagui-Tabar S."/>
            <person name="Mulder N."/>
            <person name="Nakano N."/>
            <person name="Nakauchi H."/>
            <person name="Ng P."/>
            <person name="Nilsson R."/>
            <person name="Nishiguchi S."/>
            <person name="Nishikawa S."/>
            <person name="Nori F."/>
            <person name="Ohara O."/>
            <person name="Okazaki Y."/>
            <person name="Orlando V."/>
            <person name="Pang K.C."/>
            <person name="Pavan W.J."/>
            <person name="Pavesi G."/>
            <person name="Pesole G."/>
            <person name="Petrovsky N."/>
            <person name="Piazza S."/>
            <person name="Reed J."/>
            <person name="Reid J.F."/>
            <person name="Ring B.Z."/>
            <person name="Ringwald M."/>
            <person name="Rost B."/>
            <person name="Ruan Y."/>
            <person name="Salzberg S.L."/>
            <person name="Sandelin A."/>
            <person name="Schneider C."/>
            <person name="Schoenbach C."/>
            <person name="Sekiguchi K."/>
            <person name="Semple C.A."/>
            <person name="Seno S."/>
            <person name="Sessa L."/>
            <person name="Sheng Y."/>
            <person name="Shibata Y."/>
            <person name="Shimada H."/>
            <person name="Shimada K."/>
            <person name="Silva D."/>
            <person name="Sinclair B."/>
            <person name="Sperling S."/>
            <person name="Stupka E."/>
            <person name="Sugiura K."/>
            <person name="Sultana R."/>
            <person name="Takenaka Y."/>
            <person name="Taki K."/>
            <person name="Tammoja K."/>
            <person name="Tan S.L."/>
            <person name="Tang S."/>
            <person name="Taylor M.S."/>
            <person name="Tegner J."/>
            <person name="Teichmann S.A."/>
            <person name="Ueda H.R."/>
            <person name="van Nimwegen E."/>
            <person name="Verardo R."/>
            <person name="Wei C.L."/>
            <person name="Yagi K."/>
            <person name="Yamanishi H."/>
            <person name="Zabarovsky E."/>
            <person name="Zhu S."/>
            <person name="Zimmer A."/>
            <person name="Hide W."/>
            <person name="Bult C."/>
            <person name="Grimmond S.M."/>
            <person name="Teasdale R.D."/>
            <person name="Liu E.T."/>
            <person name="Brusic V."/>
            <person name="Quackenbush J."/>
            <person name="Wahlestedt C."/>
            <person name="Mattick J.S."/>
            <person name="Hume D.A."/>
            <person name="Kai C."/>
            <person name="Sasaki D."/>
            <person name="Tomaru Y."/>
            <person name="Fukuda S."/>
            <person name="Kanamori-Katayama M."/>
            <person name="Suzuki M."/>
            <person name="Aoki J."/>
            <person name="Arakawa T."/>
            <person name="Iida J."/>
            <person name="Imamura K."/>
            <person name="Itoh M."/>
            <person name="Kato T."/>
            <person name="Kawaji H."/>
            <person name="Kawagashira N."/>
            <person name="Kawashima T."/>
            <person name="Kojima M."/>
            <person name="Kondo S."/>
            <person name="Konno H."/>
            <person name="Nakano K."/>
            <person name="Ninomiya N."/>
            <person name="Nishio T."/>
            <person name="Okada M."/>
            <person name="Plessy C."/>
            <person name="Shibata K."/>
            <person name="Shiraki T."/>
            <person name="Suzuki S."/>
            <person name="Tagami M."/>
            <person name="Waki K."/>
            <person name="Watahiki A."/>
            <person name="Okamura-Oho Y."/>
            <person name="Suzuki H."/>
            <person name="Kawai J."/>
            <person name="Hayashizaki Y."/>
        </authorList>
    </citation>
    <scope>NUCLEOTIDE SEQUENCE [LARGE SCALE MRNA]</scope>
    <source>
        <strain>NOD</strain>
    </source>
</reference>
<reference key="3">
    <citation type="journal article" date="1998" name="J. Immunol.">
        <title>Mouse MD-1, a molecule that is physically associated with RP105 and positively regulates its expression.</title>
        <authorList>
            <person name="Miyake K."/>
            <person name="Shimazu R."/>
            <person name="Kondo J."/>
            <person name="Niki T."/>
            <person name="Akashi S."/>
            <person name="Ogata H."/>
            <person name="Yamashita Y."/>
            <person name="Miura Y."/>
            <person name="Kimoto M."/>
        </authorList>
    </citation>
    <scope>INTERACTION WITH LY86</scope>
</reference>
<reference key="4">
    <citation type="journal article" date="2000" name="J. Exp. Med.">
        <title>The Toll-like receptor protein RP105 regulates lipopolysaccharide signaling in B cells.</title>
        <authorList>
            <person name="Ogata H."/>
            <person name="Su I."/>
            <person name="Miyake K."/>
            <person name="Nagai Y."/>
            <person name="Akashi S."/>
            <person name="Mecklenbraeuker I."/>
            <person name="Rajewsky K."/>
            <person name="Kimoto M."/>
            <person name="Tarakhovsky A."/>
        </authorList>
    </citation>
    <scope>FUNCTION</scope>
</reference>
<reference key="5">
    <citation type="journal article" date="2010" name="Cell">
        <title>A tissue-specific atlas of mouse protein phosphorylation and expression.</title>
        <authorList>
            <person name="Huttlin E.L."/>
            <person name="Jedrychowski M.P."/>
            <person name="Elias J.E."/>
            <person name="Goswami T."/>
            <person name="Rad R."/>
            <person name="Beausoleil S.A."/>
            <person name="Villen J."/>
            <person name="Haas W."/>
            <person name="Sowa M.E."/>
            <person name="Gygi S.P."/>
        </authorList>
    </citation>
    <scope>IDENTIFICATION BY MASS SPECTROMETRY [LARGE SCALE ANALYSIS]</scope>
    <source>
        <tissue>Spleen</tissue>
    </source>
</reference>
<reference key="6">
    <citation type="journal article" date="2011" name="J. Mol. Biol.">
        <title>Crystal structures of mouse and human RP105/MD-1 complexes reveal unique dimer organization of the toll-like receptor family.</title>
        <authorList>
            <person name="Ohto U."/>
            <person name="Miyake K."/>
            <person name="Shimizu T."/>
        </authorList>
    </citation>
    <scope>X-RAY CRYSTALLOGRAPHY (1.9 ANGSTROMS) OF 21-626 IN COMPLEX WITH LY86</scope>
    <scope>SUBUNIT</scope>
    <scope>GLYCOSYLATION AT ASN-34; ASN-53; ASN-70; ASN-244; ASN-394; ASN-402 AND ASN-451</scope>
</reference>
<name>CD180_MOUSE</name>
<comment type="function">
    <text evidence="2">May cooperate with MD-1 and TLR4 to mediate the innate immune response to bacterial lipopolysaccharide (LPS) in B-cells. Leads to NF-kappa-B activation. Also involved in the life/death decision of B-cells.</text>
</comment>
<comment type="subunit">
    <text evidence="3">M-shaped tetramer of two CD180-LY86 heterodimers.</text>
</comment>
<comment type="interaction">
    <interactant intactId="EBI-79487">
        <id>Q62192</id>
    </interactant>
    <interactant intactId="EBI-79494">
        <id>O88188</id>
        <label>Ly86</label>
    </interactant>
    <organismsDiffer>false</organismsDiffer>
    <experiments>5</experiments>
</comment>
<comment type="subcellular location">
    <subcellularLocation>
        <location>Cell membrane</location>
        <topology>Single-pass type I membrane protein</topology>
    </subcellularLocation>
</comment>
<comment type="tissue specificity">
    <text>B-lymphocytes and spleen. Not detected in thymus, kidney, muscle, heart, brain or liver.</text>
</comment>
<comment type="similarity">
    <text evidence="5">Belongs to the Toll-like receptor family.</text>
</comment>
<protein>
    <recommendedName>
        <fullName>CD180 antigen</fullName>
    </recommendedName>
    <alternativeName>
        <fullName>Lymphocyte antigen 78</fullName>
        <shortName>Ly-78</shortName>
    </alternativeName>
    <alternativeName>
        <fullName>Radioprotective 105 kDa protein</fullName>
    </alternativeName>
    <cdAntigenName>CD180</cdAntigenName>
</protein>
<dbReference type="EMBL" id="D37797">
    <property type="protein sequence ID" value="BAA07043.1"/>
    <property type="molecule type" value="mRNA"/>
</dbReference>
<dbReference type="EMBL" id="AK089255">
    <property type="protein sequence ID" value="BAC40816.1"/>
    <property type="molecule type" value="mRNA"/>
</dbReference>
<dbReference type="CCDS" id="CCDS26741.1"/>
<dbReference type="PIR" id="I56258">
    <property type="entry name" value="I56258"/>
</dbReference>
<dbReference type="RefSeq" id="NP_032559.2">
    <property type="nucleotide sequence ID" value="NM_008533.2"/>
</dbReference>
<dbReference type="PDB" id="3T6Q">
    <property type="method" value="X-ray"/>
    <property type="resolution" value="1.90 A"/>
    <property type="chains" value="A/B=21-626"/>
</dbReference>
<dbReference type="PDBsum" id="3T6Q"/>
<dbReference type="SMR" id="Q62192"/>
<dbReference type="CORUM" id="Q62192"/>
<dbReference type="DIP" id="DIP-30961N"/>
<dbReference type="FunCoup" id="Q62192">
    <property type="interactions" value="84"/>
</dbReference>
<dbReference type="IntAct" id="Q62192">
    <property type="interactions" value="1"/>
</dbReference>
<dbReference type="STRING" id="10090.ENSMUSP00000022124"/>
<dbReference type="GlyConnect" id="2197">
    <property type="glycosylation" value="1 N-Linked glycan (1 site)"/>
</dbReference>
<dbReference type="GlyCosmos" id="Q62192">
    <property type="glycosylation" value="10 sites, 1 glycan"/>
</dbReference>
<dbReference type="GlyGen" id="Q62192">
    <property type="glycosylation" value="10 sites, 5 N-linked glycans (5 sites)"/>
</dbReference>
<dbReference type="iPTMnet" id="Q62192"/>
<dbReference type="PhosphoSitePlus" id="Q62192"/>
<dbReference type="SwissPalm" id="Q62192"/>
<dbReference type="PaxDb" id="10090-ENSMUSP00000022124"/>
<dbReference type="ProteomicsDB" id="281134"/>
<dbReference type="Antibodypedia" id="1122">
    <property type="antibodies" value="436 antibodies from 37 providers"/>
</dbReference>
<dbReference type="DNASU" id="17079"/>
<dbReference type="Ensembl" id="ENSMUST00000022124.10">
    <property type="protein sequence ID" value="ENSMUSP00000022124.4"/>
    <property type="gene ID" value="ENSMUSG00000021624.10"/>
</dbReference>
<dbReference type="GeneID" id="17079"/>
<dbReference type="KEGG" id="mmu:17079"/>
<dbReference type="UCSC" id="uc007rry.1">
    <property type="organism name" value="mouse"/>
</dbReference>
<dbReference type="AGR" id="MGI:1194924"/>
<dbReference type="CTD" id="4064"/>
<dbReference type="MGI" id="MGI:1194924">
    <property type="gene designation" value="Cd180"/>
</dbReference>
<dbReference type="VEuPathDB" id="HostDB:ENSMUSG00000021624"/>
<dbReference type="eggNOG" id="KOG4641">
    <property type="taxonomic scope" value="Eukaryota"/>
</dbReference>
<dbReference type="GeneTree" id="ENSGT00940000161183"/>
<dbReference type="HOGENOM" id="CLU_006000_5_1_1"/>
<dbReference type="InParanoid" id="Q62192"/>
<dbReference type="OMA" id="FLRWKYQ"/>
<dbReference type="OrthoDB" id="676979at2759"/>
<dbReference type="PhylomeDB" id="Q62192"/>
<dbReference type="TreeFam" id="TF351113"/>
<dbReference type="Reactome" id="R-MMU-166016">
    <property type="pathway name" value="Toll Like Receptor 4 (TLR4) Cascade"/>
</dbReference>
<dbReference type="BioGRID-ORCS" id="17079">
    <property type="hits" value="2 hits in 76 CRISPR screens"/>
</dbReference>
<dbReference type="ChiTaRS" id="Cd180">
    <property type="organism name" value="mouse"/>
</dbReference>
<dbReference type="EvolutionaryTrace" id="Q62192"/>
<dbReference type="PRO" id="PR:Q62192"/>
<dbReference type="Proteomes" id="UP000000589">
    <property type="component" value="Chromosome 13"/>
</dbReference>
<dbReference type="RNAct" id="Q62192">
    <property type="molecule type" value="protein"/>
</dbReference>
<dbReference type="Bgee" id="ENSMUSG00000021624">
    <property type="expression patterns" value="Expressed in mesenteric lymph node and 73 other cell types or tissues"/>
</dbReference>
<dbReference type="ExpressionAtlas" id="Q62192">
    <property type="expression patterns" value="baseline and differential"/>
</dbReference>
<dbReference type="GO" id="GO:0072686">
    <property type="term" value="C:mitotic spindle"/>
    <property type="evidence" value="ECO:0007669"/>
    <property type="project" value="Ensembl"/>
</dbReference>
<dbReference type="GO" id="GO:0005730">
    <property type="term" value="C:nucleolus"/>
    <property type="evidence" value="ECO:0007669"/>
    <property type="project" value="Ensembl"/>
</dbReference>
<dbReference type="GO" id="GO:0005654">
    <property type="term" value="C:nucleoplasm"/>
    <property type="evidence" value="ECO:0007669"/>
    <property type="project" value="Ensembl"/>
</dbReference>
<dbReference type="GO" id="GO:0005886">
    <property type="term" value="C:plasma membrane"/>
    <property type="evidence" value="ECO:0007669"/>
    <property type="project" value="UniProtKB-SubCell"/>
</dbReference>
<dbReference type="GO" id="GO:0002322">
    <property type="term" value="P:B cell proliferation involved in immune response"/>
    <property type="evidence" value="ECO:0000315"/>
    <property type="project" value="MGI"/>
</dbReference>
<dbReference type="GO" id="GO:0071222">
    <property type="term" value="P:cellular response to lipopolysaccharide"/>
    <property type="evidence" value="ECO:0000315"/>
    <property type="project" value="MGI"/>
</dbReference>
<dbReference type="GO" id="GO:0006954">
    <property type="term" value="P:inflammatory response"/>
    <property type="evidence" value="ECO:0007669"/>
    <property type="project" value="UniProtKB-KW"/>
</dbReference>
<dbReference type="GO" id="GO:0045087">
    <property type="term" value="P:innate immune response"/>
    <property type="evidence" value="ECO:0007669"/>
    <property type="project" value="UniProtKB-KW"/>
</dbReference>
<dbReference type="GO" id="GO:0031663">
    <property type="term" value="P:lipopolysaccharide-mediated signaling pathway"/>
    <property type="evidence" value="ECO:0000316"/>
    <property type="project" value="MGI"/>
</dbReference>
<dbReference type="GO" id="GO:0031666">
    <property type="term" value="P:positive regulation of lipopolysaccharide-mediated signaling pathway"/>
    <property type="evidence" value="ECO:0000316"/>
    <property type="project" value="MGI"/>
</dbReference>
<dbReference type="FunFam" id="3.80.10.10:FF:000302">
    <property type="entry name" value="CD180 antigen"/>
    <property type="match status" value="1"/>
</dbReference>
<dbReference type="Gene3D" id="3.80.10.10">
    <property type="entry name" value="Ribonuclease Inhibitor"/>
    <property type="match status" value="1"/>
</dbReference>
<dbReference type="InterPro" id="IPR000483">
    <property type="entry name" value="Cys-rich_flank_reg_C"/>
</dbReference>
<dbReference type="InterPro" id="IPR001611">
    <property type="entry name" value="Leu-rich_rpt"/>
</dbReference>
<dbReference type="InterPro" id="IPR003591">
    <property type="entry name" value="Leu-rich_rpt_typical-subtyp"/>
</dbReference>
<dbReference type="InterPro" id="IPR041281">
    <property type="entry name" value="LRR_11"/>
</dbReference>
<dbReference type="InterPro" id="IPR032675">
    <property type="entry name" value="LRR_dom_sf"/>
</dbReference>
<dbReference type="PANTHER" id="PTHR24365">
    <property type="entry name" value="TOLL-LIKE RECEPTOR"/>
    <property type="match status" value="1"/>
</dbReference>
<dbReference type="PANTHER" id="PTHR24365:SF521">
    <property type="entry name" value="TOLL-LIKE RECEPTOR 4"/>
    <property type="match status" value="1"/>
</dbReference>
<dbReference type="Pfam" id="PF18831">
    <property type="entry name" value="LRR_11"/>
    <property type="match status" value="1"/>
</dbReference>
<dbReference type="Pfam" id="PF13855">
    <property type="entry name" value="LRR_8"/>
    <property type="match status" value="3"/>
</dbReference>
<dbReference type="SMART" id="SM00369">
    <property type="entry name" value="LRR_TYP"/>
    <property type="match status" value="7"/>
</dbReference>
<dbReference type="SMART" id="SM00082">
    <property type="entry name" value="LRRCT"/>
    <property type="match status" value="1"/>
</dbReference>
<dbReference type="SUPFAM" id="SSF52058">
    <property type="entry name" value="L domain-like"/>
    <property type="match status" value="2"/>
</dbReference>
<proteinExistence type="evidence at protein level"/>
<feature type="signal peptide" evidence="4">
    <location>
        <begin position="1"/>
        <end position="20"/>
    </location>
</feature>
<feature type="chain" id="PRO_0000034742" description="CD180 antigen">
    <location>
        <begin position="21"/>
        <end position="661"/>
    </location>
</feature>
<feature type="topological domain" description="Extracellular">
    <location>
        <begin position="21"/>
        <end position="626"/>
    </location>
</feature>
<feature type="transmembrane region" description="Helical" evidence="1">
    <location>
        <begin position="627"/>
        <end position="650"/>
    </location>
</feature>
<feature type="topological domain" description="Cytoplasmic">
    <location>
        <begin position="651"/>
        <end position="661"/>
    </location>
</feature>
<feature type="domain" description="LRRNT">
    <location>
        <begin position="33"/>
        <end position="53"/>
    </location>
</feature>
<feature type="repeat" description="LRR 1">
    <location>
        <begin position="54"/>
        <end position="75"/>
    </location>
</feature>
<feature type="repeat" description="LRR 2">
    <location>
        <begin position="78"/>
        <end position="99"/>
    </location>
</feature>
<feature type="repeat" description="LRR 3">
    <location>
        <begin position="102"/>
        <end position="123"/>
    </location>
</feature>
<feature type="repeat" description="LRR 4">
    <location>
        <begin position="126"/>
        <end position="147"/>
    </location>
</feature>
<feature type="repeat" description="LRR 5">
    <location>
        <begin position="150"/>
        <end position="171"/>
    </location>
</feature>
<feature type="repeat" description="LRR 6">
    <location>
        <begin position="174"/>
        <end position="195"/>
    </location>
</feature>
<feature type="repeat" description="LRR 7">
    <location>
        <begin position="201"/>
        <end position="221"/>
    </location>
</feature>
<feature type="repeat" description="LRR 8">
    <location>
        <begin position="275"/>
        <end position="296"/>
    </location>
</feature>
<feature type="repeat" description="LRR 9">
    <location>
        <begin position="299"/>
        <end position="321"/>
    </location>
</feature>
<feature type="repeat" description="LRR 10">
    <location>
        <begin position="322"/>
        <end position="343"/>
    </location>
</feature>
<feature type="repeat" description="LRR 11">
    <location>
        <begin position="346"/>
        <end position="366"/>
    </location>
</feature>
<feature type="repeat" description="LRR 12">
    <location>
        <begin position="371"/>
        <end position="391"/>
    </location>
</feature>
<feature type="repeat" description="LRR 13">
    <location>
        <begin position="397"/>
        <end position="418"/>
    </location>
</feature>
<feature type="repeat" description="LRR 14">
    <location>
        <begin position="421"/>
        <end position="442"/>
    </location>
</feature>
<feature type="repeat" description="LRR 15">
    <location>
        <begin position="446"/>
        <end position="466"/>
    </location>
</feature>
<feature type="repeat" description="LRR 16">
    <location>
        <begin position="470"/>
        <end position="493"/>
    </location>
</feature>
<feature type="repeat" description="LRR 17">
    <location>
        <begin position="497"/>
        <end position="518"/>
    </location>
</feature>
<feature type="repeat" description="LRR 18">
    <location>
        <begin position="521"/>
        <end position="544"/>
    </location>
</feature>
<feature type="repeat" description="LRR 19">
    <location>
        <begin position="546"/>
        <end position="566"/>
    </location>
</feature>
<feature type="domain" description="LRRCT">
    <location>
        <begin position="577"/>
        <end position="627"/>
    </location>
</feature>
<feature type="glycosylation site" description="N-linked (GlcNAc...) asparagine" evidence="3">
    <location>
        <position position="34"/>
    </location>
</feature>
<feature type="glycosylation site" description="N-linked (GlcNAc...) asparagine" evidence="3">
    <location>
        <position position="53"/>
    </location>
</feature>
<feature type="glycosylation site" description="N-linked (GlcNAc...) asparagine" evidence="3">
    <location>
        <position position="70"/>
    </location>
</feature>
<feature type="glycosylation site" description="N-linked (GlcNAc...) asparagine" evidence="1">
    <location>
        <position position="78"/>
    </location>
</feature>
<feature type="glycosylation site" description="N-linked (GlcNAc...) asparagine" evidence="1">
    <location>
        <position position="201"/>
    </location>
</feature>
<feature type="glycosylation site" description="N-linked (GlcNAc...) asparagine" evidence="3">
    <location>
        <position position="244"/>
    </location>
</feature>
<feature type="glycosylation site" description="N-linked (GlcNAc...) asparagine" evidence="1">
    <location>
        <position position="288"/>
    </location>
</feature>
<feature type="glycosylation site" description="N-linked (GlcNAc...) asparagine" evidence="3">
    <location>
        <position position="394"/>
    </location>
</feature>
<feature type="glycosylation site" description="N-linked (GlcNAc...) asparagine" evidence="3">
    <location>
        <position position="402"/>
    </location>
</feature>
<feature type="glycosylation site" description="N-linked (GlcNAc...) asparagine" evidence="3">
    <location>
        <position position="451"/>
    </location>
</feature>
<feature type="sequence conflict" description="In Ref. 1; AA sequence." evidence="5" ref="1">
    <original>T</original>
    <variation>D</variation>
    <location>
        <position position="22"/>
    </location>
</feature>
<feature type="sequence conflict" description="In Ref. 1; AA sequence." evidence="5" ref="1">
    <original>S</original>
    <variation>N</variation>
    <location>
        <position position="24"/>
    </location>
</feature>
<feature type="sequence conflict" description="In Ref. 1; AA sequence." evidence="5" ref="1">
    <original>C</original>
    <variation>L</variation>
    <location>
        <position position="28"/>
    </location>
</feature>
<feature type="sequence conflict" description="In Ref. 1; BAA07043." evidence="5" ref="1">
    <original>L</original>
    <variation>P</variation>
    <location>
        <position position="216"/>
    </location>
</feature>
<feature type="sequence conflict" description="In Ref. 1; BAA07043." evidence="5" ref="1">
    <original>R</original>
    <variation>H</variation>
    <location>
        <position position="554"/>
    </location>
</feature>
<feature type="strand" evidence="6">
    <location>
        <begin position="29"/>
        <end position="32"/>
    </location>
</feature>
<feature type="turn" evidence="6">
    <location>
        <begin position="33"/>
        <end position="35"/>
    </location>
</feature>
<feature type="strand" evidence="6">
    <location>
        <begin position="36"/>
        <end position="38"/>
    </location>
</feature>
<feature type="strand" evidence="6">
    <location>
        <begin position="57"/>
        <end position="59"/>
    </location>
</feature>
<feature type="strand" evidence="6">
    <location>
        <begin position="66"/>
        <end position="68"/>
    </location>
</feature>
<feature type="strand" evidence="6">
    <location>
        <begin position="80"/>
        <end position="83"/>
    </location>
</feature>
<feature type="turn" evidence="6">
    <location>
        <begin position="94"/>
        <end position="99"/>
    </location>
</feature>
<feature type="strand" evidence="6">
    <location>
        <begin position="105"/>
        <end position="107"/>
    </location>
</feature>
<feature type="strand" evidence="6">
    <location>
        <begin position="114"/>
        <end position="116"/>
    </location>
</feature>
<feature type="turn" evidence="6">
    <location>
        <begin position="118"/>
        <end position="121"/>
    </location>
</feature>
<feature type="strand" evidence="6">
    <location>
        <begin position="129"/>
        <end position="131"/>
    </location>
</feature>
<feature type="helix" evidence="6">
    <location>
        <begin position="140"/>
        <end position="142"/>
    </location>
</feature>
<feature type="strand" evidence="6">
    <location>
        <begin position="153"/>
        <end position="155"/>
    </location>
</feature>
<feature type="strand" evidence="6">
    <location>
        <begin position="177"/>
        <end position="179"/>
    </location>
</feature>
<feature type="helix" evidence="6">
    <location>
        <begin position="190"/>
        <end position="194"/>
    </location>
</feature>
<feature type="turn" evidence="6">
    <location>
        <begin position="195"/>
        <end position="198"/>
    </location>
</feature>
<feature type="strand" evidence="6">
    <location>
        <begin position="201"/>
        <end position="205"/>
    </location>
</feature>
<feature type="turn" evidence="6">
    <location>
        <begin position="216"/>
        <end position="221"/>
    </location>
</feature>
<feature type="strand" evidence="6">
    <location>
        <begin position="223"/>
        <end position="228"/>
    </location>
</feature>
<feature type="helix" evidence="6">
    <location>
        <begin position="235"/>
        <end position="241"/>
    </location>
</feature>
<feature type="turn" evidence="6">
    <location>
        <begin position="242"/>
        <end position="244"/>
    </location>
</feature>
<feature type="strand" evidence="6">
    <location>
        <begin position="246"/>
        <end position="251"/>
    </location>
</feature>
<feature type="helix" evidence="6">
    <location>
        <begin position="265"/>
        <end position="273"/>
    </location>
</feature>
<feature type="strand" evidence="6">
    <location>
        <begin position="274"/>
        <end position="280"/>
    </location>
</feature>
<feature type="turn" evidence="6">
    <location>
        <begin position="291"/>
        <end position="296"/>
    </location>
</feature>
<feature type="strand" evidence="6">
    <location>
        <begin position="301"/>
        <end position="304"/>
    </location>
</feature>
<feature type="strand" evidence="6">
    <location>
        <begin position="325"/>
        <end position="327"/>
    </location>
</feature>
<feature type="helix" evidence="6">
    <location>
        <begin position="336"/>
        <end position="339"/>
    </location>
</feature>
<feature type="helix" evidence="6">
    <location>
        <begin position="341"/>
        <end position="343"/>
    </location>
</feature>
<feature type="strand" evidence="6">
    <location>
        <begin position="348"/>
        <end position="351"/>
    </location>
</feature>
<feature type="turn" evidence="6">
    <location>
        <begin position="365"/>
        <end position="368"/>
    </location>
</feature>
<feature type="strand" evidence="6">
    <location>
        <begin position="374"/>
        <end position="376"/>
    </location>
</feature>
<feature type="strand" evidence="6">
    <location>
        <begin position="384"/>
        <end position="388"/>
    </location>
</feature>
<feature type="turn" evidence="6">
    <location>
        <begin position="389"/>
        <end position="394"/>
    </location>
</feature>
<feature type="strand" evidence="6">
    <location>
        <begin position="400"/>
        <end position="402"/>
    </location>
</feature>
<feature type="strand" evidence="6">
    <location>
        <begin position="409"/>
        <end position="411"/>
    </location>
</feature>
<feature type="turn" evidence="6">
    <location>
        <begin position="413"/>
        <end position="418"/>
    </location>
</feature>
<feature type="strand" evidence="6">
    <location>
        <begin position="423"/>
        <end position="426"/>
    </location>
</feature>
<feature type="turn" evidence="6">
    <location>
        <begin position="440"/>
        <end position="443"/>
    </location>
</feature>
<feature type="strand" evidence="6">
    <location>
        <begin position="449"/>
        <end position="451"/>
    </location>
</feature>
<feature type="turn" evidence="6">
    <location>
        <begin position="462"/>
        <end position="467"/>
    </location>
</feature>
<feature type="strand" evidence="6">
    <location>
        <begin position="473"/>
        <end position="475"/>
    </location>
</feature>
<feature type="helix" evidence="6">
    <location>
        <begin position="482"/>
        <end position="484"/>
    </location>
</feature>
<feature type="helix" evidence="6">
    <location>
        <begin position="491"/>
        <end position="494"/>
    </location>
</feature>
<feature type="strand" evidence="6">
    <location>
        <begin position="500"/>
        <end position="502"/>
    </location>
</feature>
<feature type="turn" evidence="6">
    <location>
        <begin position="513"/>
        <end position="518"/>
    </location>
</feature>
<feature type="strand" evidence="6">
    <location>
        <begin position="524"/>
        <end position="526"/>
    </location>
</feature>
<feature type="helix" evidence="6">
    <location>
        <begin position="534"/>
        <end position="540"/>
    </location>
</feature>
<feature type="strand" evidence="6">
    <location>
        <begin position="547"/>
        <end position="549"/>
    </location>
</feature>
<feature type="helix" evidence="6">
    <location>
        <begin position="560"/>
        <end position="562"/>
    </location>
</feature>
<feature type="helix" evidence="6">
    <location>
        <begin position="563"/>
        <end position="567"/>
    </location>
</feature>
<feature type="strand" evidence="6">
    <location>
        <begin position="569"/>
        <end position="573"/>
    </location>
</feature>
<feature type="helix" evidence="6">
    <location>
        <begin position="583"/>
        <end position="585"/>
    </location>
</feature>
<feature type="helix" evidence="6">
    <location>
        <begin position="586"/>
        <end position="594"/>
    </location>
</feature>
<feature type="helix" evidence="6">
    <location>
        <begin position="596"/>
        <end position="598"/>
    </location>
</feature>
<feature type="helix" evidence="6">
    <location>
        <begin position="602"/>
        <end position="604"/>
    </location>
</feature>
<feature type="strand" evidence="6">
    <location>
        <begin position="606"/>
        <end position="610"/>
    </location>
</feature>
<feature type="helix" evidence="6">
    <location>
        <begin position="611"/>
        <end position="613"/>
    </location>
</feature>
<feature type="helix" evidence="6">
    <location>
        <begin position="618"/>
        <end position="620"/>
    </location>
</feature>
<organism>
    <name type="scientific">Mus musculus</name>
    <name type="common">Mouse</name>
    <dbReference type="NCBI Taxonomy" id="10090"/>
    <lineage>
        <taxon>Eukaryota</taxon>
        <taxon>Metazoa</taxon>
        <taxon>Chordata</taxon>
        <taxon>Craniata</taxon>
        <taxon>Vertebrata</taxon>
        <taxon>Euteleostomi</taxon>
        <taxon>Mammalia</taxon>
        <taxon>Eutheria</taxon>
        <taxon>Euarchontoglires</taxon>
        <taxon>Glires</taxon>
        <taxon>Rodentia</taxon>
        <taxon>Myomorpha</taxon>
        <taxon>Muroidea</taxon>
        <taxon>Muridae</taxon>
        <taxon>Murinae</taxon>
        <taxon>Mus</taxon>
        <taxon>Mus</taxon>
    </lineage>
</organism>
<keyword id="KW-0002">3D-structure</keyword>
<keyword id="KW-1003">Cell membrane</keyword>
<keyword id="KW-0903">Direct protein sequencing</keyword>
<keyword id="KW-0325">Glycoprotein</keyword>
<keyword id="KW-0391">Immunity</keyword>
<keyword id="KW-0395">Inflammatory response</keyword>
<keyword id="KW-0399">Innate immunity</keyword>
<keyword id="KW-0433">Leucine-rich repeat</keyword>
<keyword id="KW-0472">Membrane</keyword>
<keyword id="KW-0675">Receptor</keyword>
<keyword id="KW-1185">Reference proteome</keyword>
<keyword id="KW-0677">Repeat</keyword>
<keyword id="KW-0732">Signal</keyword>
<keyword id="KW-0812">Transmembrane</keyword>
<keyword id="KW-1133">Transmembrane helix</keyword>
<gene>
    <name type="primary">Cd180</name>
    <name type="synonym">Ly78</name>
    <name type="synonym">Rp105</name>
</gene>